<sequence>MAKKVVGLIKLQLPAGKATPAPPVGPALGQHGVNIMAFCKEYNAKTANQAGFTIPVVITVYQDRSFSFILKTPPAAVLIKKAAGIESGSGVPNKNKVGKITKEQVKEIAQTKMPDLNAASLEAAMSMIAGTARSMGVEVVD</sequence>
<protein>
    <recommendedName>
        <fullName evidence="1">Large ribosomal subunit protein uL11</fullName>
    </recommendedName>
    <alternativeName>
        <fullName evidence="2">50S ribosomal protein L11</fullName>
    </alternativeName>
</protein>
<comment type="function">
    <text evidence="1">Forms part of the ribosomal stalk which helps the ribosome interact with GTP-bound translation factors.</text>
</comment>
<comment type="subunit">
    <text evidence="1">Part of the ribosomal stalk of the 50S ribosomal subunit. Interacts with L10 and the large rRNA to form the base of the stalk. L10 forms an elongated spine to which L12 dimers bind in a sequential fashion forming a multimeric L10(L12)X complex.</text>
</comment>
<comment type="PTM">
    <text evidence="1">One or more lysine residues are methylated.</text>
</comment>
<comment type="similarity">
    <text evidence="1">Belongs to the universal ribosomal protein uL11 family.</text>
</comment>
<name>RL11_CLOAB</name>
<dbReference type="EMBL" id="AE001437">
    <property type="protein sequence ID" value="AAK81085.1"/>
    <property type="molecule type" value="Genomic_DNA"/>
</dbReference>
<dbReference type="PIR" id="B97287">
    <property type="entry name" value="B97287"/>
</dbReference>
<dbReference type="RefSeq" id="NP_349745.1">
    <property type="nucleotide sequence ID" value="NC_003030.1"/>
</dbReference>
<dbReference type="RefSeq" id="WP_010966425.1">
    <property type="nucleotide sequence ID" value="NC_003030.1"/>
</dbReference>
<dbReference type="SMR" id="Q97EG5"/>
<dbReference type="STRING" id="272562.CA_C3148"/>
<dbReference type="GeneID" id="44999633"/>
<dbReference type="KEGG" id="cac:CA_C3148"/>
<dbReference type="PATRIC" id="fig|272562.8.peg.3328"/>
<dbReference type="eggNOG" id="COG0080">
    <property type="taxonomic scope" value="Bacteria"/>
</dbReference>
<dbReference type="HOGENOM" id="CLU_074237_2_1_9"/>
<dbReference type="OrthoDB" id="9802408at2"/>
<dbReference type="Proteomes" id="UP000000814">
    <property type="component" value="Chromosome"/>
</dbReference>
<dbReference type="GO" id="GO:0022625">
    <property type="term" value="C:cytosolic large ribosomal subunit"/>
    <property type="evidence" value="ECO:0007669"/>
    <property type="project" value="TreeGrafter"/>
</dbReference>
<dbReference type="GO" id="GO:0070180">
    <property type="term" value="F:large ribosomal subunit rRNA binding"/>
    <property type="evidence" value="ECO:0007669"/>
    <property type="project" value="UniProtKB-UniRule"/>
</dbReference>
<dbReference type="GO" id="GO:0003735">
    <property type="term" value="F:structural constituent of ribosome"/>
    <property type="evidence" value="ECO:0007669"/>
    <property type="project" value="InterPro"/>
</dbReference>
<dbReference type="GO" id="GO:0006412">
    <property type="term" value="P:translation"/>
    <property type="evidence" value="ECO:0007669"/>
    <property type="project" value="UniProtKB-UniRule"/>
</dbReference>
<dbReference type="CDD" id="cd00349">
    <property type="entry name" value="Ribosomal_L11"/>
    <property type="match status" value="1"/>
</dbReference>
<dbReference type="FunFam" id="1.10.10.250:FF:000001">
    <property type="entry name" value="50S ribosomal protein L11"/>
    <property type="match status" value="1"/>
</dbReference>
<dbReference type="FunFam" id="3.30.1550.10:FF:000001">
    <property type="entry name" value="50S ribosomal protein L11"/>
    <property type="match status" value="1"/>
</dbReference>
<dbReference type="Gene3D" id="1.10.10.250">
    <property type="entry name" value="Ribosomal protein L11, C-terminal domain"/>
    <property type="match status" value="1"/>
</dbReference>
<dbReference type="Gene3D" id="3.30.1550.10">
    <property type="entry name" value="Ribosomal protein L11/L12, N-terminal domain"/>
    <property type="match status" value="1"/>
</dbReference>
<dbReference type="HAMAP" id="MF_00736">
    <property type="entry name" value="Ribosomal_uL11"/>
    <property type="match status" value="1"/>
</dbReference>
<dbReference type="InterPro" id="IPR000911">
    <property type="entry name" value="Ribosomal_uL11"/>
</dbReference>
<dbReference type="InterPro" id="IPR006519">
    <property type="entry name" value="Ribosomal_uL11_bac-typ"/>
</dbReference>
<dbReference type="InterPro" id="IPR020783">
    <property type="entry name" value="Ribosomal_uL11_C"/>
</dbReference>
<dbReference type="InterPro" id="IPR036769">
    <property type="entry name" value="Ribosomal_uL11_C_sf"/>
</dbReference>
<dbReference type="InterPro" id="IPR020784">
    <property type="entry name" value="Ribosomal_uL11_N"/>
</dbReference>
<dbReference type="InterPro" id="IPR036796">
    <property type="entry name" value="Ribosomal_uL11_N_sf"/>
</dbReference>
<dbReference type="NCBIfam" id="TIGR01632">
    <property type="entry name" value="L11_bact"/>
    <property type="match status" value="1"/>
</dbReference>
<dbReference type="PANTHER" id="PTHR11661">
    <property type="entry name" value="60S RIBOSOMAL PROTEIN L12"/>
    <property type="match status" value="1"/>
</dbReference>
<dbReference type="PANTHER" id="PTHR11661:SF1">
    <property type="entry name" value="LARGE RIBOSOMAL SUBUNIT PROTEIN UL11M"/>
    <property type="match status" value="1"/>
</dbReference>
<dbReference type="Pfam" id="PF00298">
    <property type="entry name" value="Ribosomal_L11"/>
    <property type="match status" value="1"/>
</dbReference>
<dbReference type="Pfam" id="PF03946">
    <property type="entry name" value="Ribosomal_L11_N"/>
    <property type="match status" value="1"/>
</dbReference>
<dbReference type="SMART" id="SM00649">
    <property type="entry name" value="RL11"/>
    <property type="match status" value="1"/>
</dbReference>
<dbReference type="SUPFAM" id="SSF54747">
    <property type="entry name" value="Ribosomal L11/L12e N-terminal domain"/>
    <property type="match status" value="1"/>
</dbReference>
<dbReference type="SUPFAM" id="SSF46906">
    <property type="entry name" value="Ribosomal protein L11, C-terminal domain"/>
    <property type="match status" value="1"/>
</dbReference>
<proteinExistence type="inferred from homology"/>
<organism>
    <name type="scientific">Clostridium acetobutylicum (strain ATCC 824 / DSM 792 / JCM 1419 / IAM 19013 / LMG 5710 / NBRC 13948 / NRRL B-527 / VKM B-1787 / 2291 / W)</name>
    <dbReference type="NCBI Taxonomy" id="272562"/>
    <lineage>
        <taxon>Bacteria</taxon>
        <taxon>Bacillati</taxon>
        <taxon>Bacillota</taxon>
        <taxon>Clostridia</taxon>
        <taxon>Eubacteriales</taxon>
        <taxon>Clostridiaceae</taxon>
        <taxon>Clostridium</taxon>
    </lineage>
</organism>
<reference key="1">
    <citation type="journal article" date="2001" name="J. Bacteriol.">
        <title>Genome sequence and comparative analysis of the solvent-producing bacterium Clostridium acetobutylicum.</title>
        <authorList>
            <person name="Noelling J."/>
            <person name="Breton G."/>
            <person name="Omelchenko M.V."/>
            <person name="Makarova K.S."/>
            <person name="Zeng Q."/>
            <person name="Gibson R."/>
            <person name="Lee H.M."/>
            <person name="Dubois J."/>
            <person name="Qiu D."/>
            <person name="Hitti J."/>
            <person name="Wolf Y.I."/>
            <person name="Tatusov R.L."/>
            <person name="Sabathe F."/>
            <person name="Doucette-Stamm L.A."/>
            <person name="Soucaille P."/>
            <person name="Daly M.J."/>
            <person name="Bennett G.N."/>
            <person name="Koonin E.V."/>
            <person name="Smith D.R."/>
        </authorList>
    </citation>
    <scope>NUCLEOTIDE SEQUENCE [LARGE SCALE GENOMIC DNA]</scope>
    <source>
        <strain>ATCC 824 / DSM 792 / JCM 1419 / IAM 19013 / LMG 5710 / NBRC 13948 / NRRL B-527 / VKM B-1787 / 2291 / W</strain>
    </source>
</reference>
<feature type="chain" id="PRO_0000104273" description="Large ribosomal subunit protein uL11">
    <location>
        <begin position="1"/>
        <end position="141"/>
    </location>
</feature>
<gene>
    <name evidence="1" type="primary">rplK</name>
    <name type="ordered locus">CA_C3148</name>
</gene>
<keyword id="KW-0488">Methylation</keyword>
<keyword id="KW-1185">Reference proteome</keyword>
<keyword id="KW-0687">Ribonucleoprotein</keyword>
<keyword id="KW-0689">Ribosomal protein</keyword>
<keyword id="KW-0694">RNA-binding</keyword>
<keyword id="KW-0699">rRNA-binding</keyword>
<accession>Q97EG5</accession>
<evidence type="ECO:0000255" key="1">
    <source>
        <dbReference type="HAMAP-Rule" id="MF_00736"/>
    </source>
</evidence>
<evidence type="ECO:0000305" key="2"/>